<reference key="1">
    <citation type="submission" date="2015-10" db="EMBL/GenBank/DDBJ databases">
        <title>Genomic legacy of the African cheetah, Acinonyx jubatus.</title>
        <authorList>
            <person name="Dobrynin P."/>
            <person name="Liu S."/>
            <person name="Tamazian G."/>
            <person name="Xiong Z."/>
            <person name="Yurchenko A."/>
            <person name="Krasheninnikova K."/>
            <person name="Kliver S."/>
            <person name="Koepfli K.-P."/>
            <person name="Johnson W."/>
            <person name="Kuderna L."/>
            <person name="Garcia-Perez R."/>
            <person name="Montero M.D.M."/>
            <person name="Godinez R."/>
            <person name="Makunin A."/>
            <person name="Komissarov A."/>
            <person name="Brukhin V."/>
            <person name="Qiu W."/>
            <person name="Zhou L."/>
            <person name="Li F."/>
            <person name="Yi J."/>
            <person name="Driscoll C."/>
            <person name="Antunes A."/>
            <person name="Oleksyk T.K."/>
            <person name="Eizirik E."/>
            <person name="Perelman P."/>
            <person name="Roelke' M."/>
            <person name="Wildt D."/>
            <person name="Diekhans M."/>
            <person name="Marques-Bonet T."/>
            <person name="Schmidt-Kuntzel A."/>
            <person name="Marker L."/>
            <person name="Bhak J."/>
            <person name="Wang J."/>
            <person name="Zhang G."/>
            <person name="Obrien S."/>
        </authorList>
    </citation>
    <scope>NUCLEOTIDE SEQUENCE [LARGE SCALE GENOMIC DNA]</scope>
</reference>
<reference key="2">
    <citation type="unpublished observations" date="2017-05">
        <authorList>
            <person name="Puppione D.L."/>
        </authorList>
    </citation>
    <scope>IDENTIFICATION</scope>
</reference>
<protein>
    <recommendedName>
        <fullName>Apolipoprotein A-II</fullName>
        <shortName>Apo-AII</shortName>
        <shortName>ApoA-II</shortName>
    </recommendedName>
    <alternativeName>
        <fullName>Apolipoprotein A2</fullName>
    </alternativeName>
    <component>
        <recommendedName>
            <fullName>Proapolipoprotein A-II</fullName>
            <shortName>ProapoA-II</shortName>
        </recommendedName>
    </component>
    <component>
        <recommendedName>
            <fullName>Truncated apolipoprotein A-II</fullName>
        </recommendedName>
    </component>
</protein>
<feature type="signal peptide" evidence="2">
    <location>
        <begin position="1"/>
        <end position="18"/>
    </location>
</feature>
<feature type="chain" id="PRO_0000440140" description="Proapolipoprotein A-II">
    <location>
        <begin position="19"/>
        <end position="100"/>
    </location>
</feature>
<feature type="chain" id="PRO_0000440141" description="Apolipoprotein A-II">
    <location>
        <begin position="24"/>
        <end position="100"/>
    </location>
</feature>
<feature type="chain" id="PRO_0000440142" description="Truncated apolipoprotein A-II">
    <location>
        <begin position="24"/>
        <end position="99"/>
    </location>
</feature>
<proteinExistence type="inferred from homology"/>
<sequence length="100" mass="11248">MKLLAMAVLLLTICSLEGALVRRQAEELSLQRLVSQYFQTVTDYGKDLVEKAKGPELQAQAKAYFEKTQEQLTPLVKKAGTDLINFLNNFMDLKTQPATQ</sequence>
<accession>P0DP50</accession>
<comment type="function">
    <text>May stabilize HDL (high density lipoprotein) structure by its association with lipids, and affect the HDL metabolism.</text>
</comment>
<comment type="subunit">
    <text evidence="1">Monomer. Interacts with NAXE and NDRG1 (By similarity).</text>
</comment>
<comment type="subcellular location">
    <subcellularLocation>
        <location evidence="1">Secreted</location>
    </subcellularLocation>
</comment>
<comment type="similarity">
    <text evidence="3">Belongs to the apolipoprotein A2 family.</text>
</comment>
<name>APOA2_ACIJB</name>
<keyword id="KW-0165">Cleavage on pair of basic residues</keyword>
<keyword id="KW-0345">HDL</keyword>
<keyword id="KW-0445">Lipid transport</keyword>
<keyword id="KW-1185">Reference proteome</keyword>
<keyword id="KW-0964">Secreted</keyword>
<keyword id="KW-0732">Signal</keyword>
<keyword id="KW-0813">Transport</keyword>
<gene>
    <name type="primary">APOA2</name>
</gene>
<organism>
    <name type="scientific">Acinonyx jubatus</name>
    <name type="common">Cheetah</name>
    <dbReference type="NCBI Taxonomy" id="32536"/>
    <lineage>
        <taxon>Eukaryota</taxon>
        <taxon>Metazoa</taxon>
        <taxon>Chordata</taxon>
        <taxon>Craniata</taxon>
        <taxon>Vertebrata</taxon>
        <taxon>Euteleostomi</taxon>
        <taxon>Mammalia</taxon>
        <taxon>Eutheria</taxon>
        <taxon>Laurasiatheria</taxon>
        <taxon>Carnivora</taxon>
        <taxon>Feliformia</taxon>
        <taxon>Felidae</taxon>
        <taxon>Felinae</taxon>
        <taxon>Acinonyx</taxon>
    </lineage>
</organism>
<dbReference type="EMBL" id="LLWD01000533">
    <property type="status" value="NOT_ANNOTATED_CDS"/>
    <property type="molecule type" value="Genomic_DNA"/>
</dbReference>
<dbReference type="RefSeq" id="XP_014931714.1">
    <property type="nucleotide sequence ID" value="XM_015076228.3"/>
</dbReference>
<dbReference type="RefSeq" id="XP_026904445.1">
    <property type="nucleotide sequence ID" value="XM_027048644.2"/>
</dbReference>
<dbReference type="SMR" id="P0DP50"/>
<dbReference type="GeneID" id="106978537"/>
<dbReference type="KEGG" id="aju:106978537"/>
<dbReference type="CTD" id="336"/>
<dbReference type="Proteomes" id="UP000504626">
    <property type="component" value="Unplaced"/>
</dbReference>
<dbReference type="GO" id="GO:0034366">
    <property type="term" value="C:spherical high-density lipoprotein particle"/>
    <property type="evidence" value="ECO:0007669"/>
    <property type="project" value="TreeGrafter"/>
</dbReference>
<dbReference type="GO" id="GO:0120020">
    <property type="term" value="F:cholesterol transfer activity"/>
    <property type="evidence" value="ECO:0007669"/>
    <property type="project" value="TreeGrafter"/>
</dbReference>
<dbReference type="GO" id="GO:0008035">
    <property type="term" value="F:high-density lipoprotein particle binding"/>
    <property type="evidence" value="ECO:0007669"/>
    <property type="project" value="TreeGrafter"/>
</dbReference>
<dbReference type="GO" id="GO:0008289">
    <property type="term" value="F:lipid binding"/>
    <property type="evidence" value="ECO:0007669"/>
    <property type="project" value="InterPro"/>
</dbReference>
<dbReference type="GO" id="GO:0042632">
    <property type="term" value="P:cholesterol homeostasis"/>
    <property type="evidence" value="ECO:0007669"/>
    <property type="project" value="TreeGrafter"/>
</dbReference>
<dbReference type="GO" id="GO:0030301">
    <property type="term" value="P:cholesterol transport"/>
    <property type="evidence" value="ECO:0007669"/>
    <property type="project" value="TreeGrafter"/>
</dbReference>
<dbReference type="GO" id="GO:0042157">
    <property type="term" value="P:lipoprotein metabolic process"/>
    <property type="evidence" value="ECO:0007669"/>
    <property type="project" value="InterPro"/>
</dbReference>
<dbReference type="GO" id="GO:0050766">
    <property type="term" value="P:positive regulation of phagocytosis"/>
    <property type="evidence" value="ECO:0000250"/>
    <property type="project" value="UniProtKB"/>
</dbReference>
<dbReference type="GO" id="GO:0050821">
    <property type="term" value="P:protein stabilization"/>
    <property type="evidence" value="ECO:0000250"/>
    <property type="project" value="UniProtKB"/>
</dbReference>
<dbReference type="Gene3D" id="6.10.250.100">
    <property type="match status" value="1"/>
</dbReference>
<dbReference type="InterPro" id="IPR006801">
    <property type="entry name" value="ApoA-II"/>
</dbReference>
<dbReference type="InterPro" id="IPR036172">
    <property type="entry name" value="ApoA-II_sf"/>
</dbReference>
<dbReference type="PANTHER" id="PTHR11027">
    <property type="entry name" value="APOLIPOPROTEIN A-II"/>
    <property type="match status" value="1"/>
</dbReference>
<dbReference type="PANTHER" id="PTHR11027:SF0">
    <property type="entry name" value="APOLIPOPROTEIN A-II"/>
    <property type="match status" value="1"/>
</dbReference>
<dbReference type="Pfam" id="PF04711">
    <property type="entry name" value="ApoA-II"/>
    <property type="match status" value="1"/>
</dbReference>
<dbReference type="SUPFAM" id="SSF82936">
    <property type="entry name" value="Apolipoprotein A-II"/>
    <property type="match status" value="1"/>
</dbReference>
<evidence type="ECO:0000250" key="1">
    <source>
        <dbReference type="UniProtKB" id="P02652"/>
    </source>
</evidence>
<evidence type="ECO:0000255" key="2"/>
<evidence type="ECO:0000305" key="3"/>